<comment type="function">
    <text evidence="1">ATP-dependent DNA 3'-5' helicase required for initiation of viral DNA replication. It forms a complex with the viral E2 protein. The E1-E2 complex binds to the replication origin which contains binding sites for both proteins. During the initial step, a dimer of E1 interacts with a dimer of protein E2 leading to a complex that binds the viral origin of replication with high specificity. Then, a second dimer of E1 displaces the E2 dimer in an ATP-dependent manner to form the E1 tetramer. Following this, two E1 monomers are added to each half of the site, which results in the formation of two E1 trimers on the viral ori. Subsequently, two hexamers will be created. The double hexamer acts as a bi-directional helicase machinery and unwinds the viral DNA and then recruits the host DNA polymerase to start replication.</text>
</comment>
<comment type="catalytic activity">
    <reaction evidence="1">
        <text>Couples ATP hydrolysis with the unwinding of duplex DNA by translocating in the 3'-5' direction.</text>
        <dbReference type="EC" id="5.6.2.4"/>
    </reaction>
</comment>
<comment type="catalytic activity">
    <reaction evidence="1">
        <text>ATP + H2O = ADP + phosphate + H(+)</text>
        <dbReference type="Rhea" id="RHEA:13065"/>
        <dbReference type="ChEBI" id="CHEBI:15377"/>
        <dbReference type="ChEBI" id="CHEBI:15378"/>
        <dbReference type="ChEBI" id="CHEBI:30616"/>
        <dbReference type="ChEBI" id="CHEBI:43474"/>
        <dbReference type="ChEBI" id="CHEBI:456216"/>
        <dbReference type="EC" id="5.6.2.4"/>
    </reaction>
</comment>
<comment type="subunit">
    <text evidence="1">Can form hexamers. Interacts with E2 protein; this interaction increases E1 DNA binding specificity. Interacts with host DNA polymerase subunit POLA2. Interacts with host single stranded DNA-binding protein RPA1. Interacts with host TOP1; this interaction stimulates the enzymatic activity of TOP1.</text>
</comment>
<comment type="subcellular location">
    <subcellularLocation>
        <location evidence="1">Host nucleus</location>
    </subcellularLocation>
</comment>
<comment type="PTM">
    <text evidence="1">Phosphorylated.</text>
</comment>
<comment type="PTM">
    <text evidence="1">Sumoylated.</text>
</comment>
<comment type="similarity">
    <text evidence="1">Belongs to the papillomaviridae E1 protein family.</text>
</comment>
<gene>
    <name evidence="1" type="primary">E1</name>
</gene>
<feature type="chain" id="PRO_0000133171" description="Replication protein E1">
    <location>
        <begin position="1"/>
        <end position="625"/>
    </location>
</feature>
<feature type="domain" description="SF3 helicase" evidence="1">
    <location>
        <begin position="427"/>
        <end position="577"/>
    </location>
</feature>
<feature type="region of interest" description="Disordered" evidence="2">
    <location>
        <begin position="147"/>
        <end position="169"/>
    </location>
</feature>
<feature type="region of interest" description="DNA-binding region" evidence="1">
    <location>
        <begin position="162"/>
        <end position="328"/>
    </location>
</feature>
<feature type="short sequence motif" description="Nuclear localization signal" evidence="1">
    <location>
        <begin position="83"/>
        <end position="85"/>
    </location>
</feature>
<feature type="short sequence motif" description="Nuclear export signal" evidence="1">
    <location>
        <begin position="106"/>
        <end position="115"/>
    </location>
</feature>
<feature type="binding site" evidence="1">
    <location>
        <begin position="453"/>
        <end position="460"/>
    </location>
    <ligand>
        <name>ATP</name>
        <dbReference type="ChEBI" id="CHEBI:30616"/>
    </ligand>
</feature>
<feature type="modified residue" description="Phosphoserine; by host" evidence="1">
    <location>
        <position position="89"/>
    </location>
</feature>
<feature type="modified residue" description="Phosphoserine; by host" evidence="1">
    <location>
        <position position="93"/>
    </location>
</feature>
<feature type="modified residue" description="Phosphoserine; by host" evidence="1">
    <location>
        <position position="107"/>
    </location>
</feature>
<feature type="cross-link" description="Glycyl lysine isopeptide (Lys-Gly) (interchain with G-Cter in SUMO)" evidence="1">
    <location>
        <position position="534"/>
    </location>
</feature>
<accession>P22154</accession>
<reference key="1">
    <citation type="journal article" date="1991" name="Virology">
        <title>Characterization of the complete RhPV 1 genomic sequence and an integration locus from a metastatic tumor.</title>
        <authorList>
            <person name="Ostrow R.S."/>
            <person name="Labresh K.V."/>
            <person name="Faras A.J."/>
        </authorList>
    </citation>
    <scope>NUCLEOTIDE SEQUENCE [GENOMIC DNA]</scope>
</reference>
<sequence>MDPEGTPGEGVGCTGWFNVEAIVERKTGDVVSEDEDDTEDTGIDLVDFIDDTCGSVQTGDEAPGALLHAQETQAHAEAVQVLKRKFVGSPAVSPLGNYNPCVDRDLSPRLNEISLNQGSGQAKRRLFLPDSGYGNTEVETSLLQVAGGGGQDVQAGGKENTRPDDGGGDATQLLRCSNLKATLLSKFKSVYGVSFSELVRSFKSDRTTCADWVVGAAGVHHSVAEGLKQLIQPFCSYAHIQCLTCDWGVYLLLLARFKCGKNRLTVSKCMSTLLNVQETHMLIEPPKLRSAAAALYWYRTGISNVSEVIGETPEWITRQTMFQHGLEDSIFDLSEMVQWAYDHDFTDDSVIAYEYAQLAGIDSNAAAFLKSNAQAKYVKDCATMCRHYKRAERQQMTMSQWIKQRCEKTDDGGDWRPIVQFLRYQGVEFIAFLAALKLFLKGIPKKNCIVLFGPPNTGKSYFGMSLIHFLQGSIISYVNSNSHFWLQPLADAKVAMLDDATPQCWSYIDNYLRNALDGNPISVDRKHKNLVQMKCPPLLITSNTNAGQDDRWMYLHSRMVVFTFEQPFPFDQNGNPVYELNDKNWKSFFSRTWSRLDLQEEEETENDGSTCRAFKCVAGQNLRTV</sequence>
<protein>
    <recommendedName>
        <fullName evidence="1">Replication protein E1</fullName>
        <ecNumber evidence="1">5.6.2.4</ecNumber>
    </recommendedName>
    <alternativeName>
        <fullName evidence="1">ATP-dependent helicase E1</fullName>
    </alternativeName>
    <alternativeName>
        <fullName evidence="1">DNA 3'-5' helicase E1</fullName>
    </alternativeName>
</protein>
<organismHost>
    <name type="scientific">Macaca mulatta</name>
    <name type="common">Rhesus macaque</name>
    <dbReference type="NCBI Taxonomy" id="9544"/>
</organismHost>
<organism>
    <name type="scientific">Macaca mulata papillomavirus 1</name>
    <name type="common">Rhpv 1</name>
    <name type="synonym">Rhesus papillomavirus type 1</name>
    <dbReference type="NCBI Taxonomy" id="2779844"/>
    <lineage>
        <taxon>Viruses</taxon>
        <taxon>Monodnaviria</taxon>
        <taxon>Shotokuvirae</taxon>
        <taxon>Cossaviricota</taxon>
        <taxon>Papovaviricetes</taxon>
        <taxon>Zurhausenvirales</taxon>
        <taxon>Papillomaviridae</taxon>
        <taxon>Firstpapillomavirinae</taxon>
        <taxon>Alphapapillomavirus</taxon>
        <taxon>Rhesus papillomavirus type 1</taxon>
    </lineage>
</organism>
<dbReference type="EC" id="5.6.2.4" evidence="1"/>
<dbReference type="EMBL" id="M60184">
    <property type="protein sequence ID" value="AAA79313.1"/>
    <property type="molecule type" value="Genomic_DNA"/>
</dbReference>
<dbReference type="PIR" id="C38503">
    <property type="entry name" value="W1WLR1"/>
</dbReference>
<dbReference type="RefSeq" id="NP_043333.1">
    <property type="nucleotide sequence ID" value="NC_001678.1"/>
</dbReference>
<dbReference type="SMR" id="P22154"/>
<dbReference type="GeneID" id="1489008"/>
<dbReference type="KEGG" id="vg:1489008"/>
<dbReference type="Proteomes" id="UP000008169">
    <property type="component" value="Genome"/>
</dbReference>
<dbReference type="GO" id="GO:0042025">
    <property type="term" value="C:host cell nucleus"/>
    <property type="evidence" value="ECO:0007669"/>
    <property type="project" value="UniProtKB-SubCell"/>
</dbReference>
<dbReference type="GO" id="GO:0005524">
    <property type="term" value="F:ATP binding"/>
    <property type="evidence" value="ECO:0007669"/>
    <property type="project" value="UniProtKB-UniRule"/>
</dbReference>
<dbReference type="GO" id="GO:0016887">
    <property type="term" value="F:ATP hydrolysis activity"/>
    <property type="evidence" value="ECO:0007669"/>
    <property type="project" value="RHEA"/>
</dbReference>
<dbReference type="GO" id="GO:0003677">
    <property type="term" value="F:DNA binding"/>
    <property type="evidence" value="ECO:0007669"/>
    <property type="project" value="UniProtKB-UniRule"/>
</dbReference>
<dbReference type="GO" id="GO:0003678">
    <property type="term" value="F:DNA helicase activity"/>
    <property type="evidence" value="ECO:0007669"/>
    <property type="project" value="UniProtKB-UniRule"/>
</dbReference>
<dbReference type="GO" id="GO:0006260">
    <property type="term" value="P:DNA replication"/>
    <property type="evidence" value="ECO:0007669"/>
    <property type="project" value="UniProtKB-UniRule"/>
</dbReference>
<dbReference type="Gene3D" id="3.40.1310.10">
    <property type="match status" value="1"/>
</dbReference>
<dbReference type="Gene3D" id="3.40.50.300">
    <property type="entry name" value="P-loop containing nucleotide triphosphate hydrolases"/>
    <property type="match status" value="1"/>
</dbReference>
<dbReference type="Gene3D" id="1.10.10.510">
    <property type="entry name" value="Zinc finger, large T-antigen D1 domain"/>
    <property type="match status" value="1"/>
</dbReference>
<dbReference type="HAMAP" id="MF_04000">
    <property type="entry name" value="PPV_E1"/>
    <property type="match status" value="1"/>
</dbReference>
<dbReference type="InterPro" id="IPR014015">
    <property type="entry name" value="Helicase_SF3_DNA-vir"/>
</dbReference>
<dbReference type="InterPro" id="IPR027417">
    <property type="entry name" value="P-loop_NTPase"/>
</dbReference>
<dbReference type="InterPro" id="IPR001177">
    <property type="entry name" value="PPV_DNA_helicase_E1_C"/>
</dbReference>
<dbReference type="InterPro" id="IPR014000">
    <property type="entry name" value="PPV_DNA_helicase_E1_N"/>
</dbReference>
<dbReference type="InterPro" id="IPR046832">
    <property type="entry name" value="PPV_E1_DBD"/>
</dbReference>
<dbReference type="InterPro" id="IPR046935">
    <property type="entry name" value="PPV_E1_DBD_sf"/>
</dbReference>
<dbReference type="InterPro" id="IPR016393">
    <property type="entry name" value="Rep_E1_papillomaV"/>
</dbReference>
<dbReference type="InterPro" id="IPR037102">
    <property type="entry name" value="Znf_lg_T-Ag_D1_dom_sf"/>
</dbReference>
<dbReference type="Pfam" id="PF00519">
    <property type="entry name" value="PPV_E1_C"/>
    <property type="match status" value="1"/>
</dbReference>
<dbReference type="Pfam" id="PF20450">
    <property type="entry name" value="PPV_E1_DBD"/>
    <property type="match status" value="1"/>
</dbReference>
<dbReference type="Pfam" id="PF00524">
    <property type="entry name" value="PPV_E1_N"/>
    <property type="match status" value="1"/>
</dbReference>
<dbReference type="PIRSF" id="PIRSF003383">
    <property type="entry name" value="Rep_E1_papillomaV"/>
    <property type="match status" value="1"/>
</dbReference>
<dbReference type="SUPFAM" id="SSF55464">
    <property type="entry name" value="Origin of replication-binding domain, RBD-like"/>
    <property type="match status" value="1"/>
</dbReference>
<dbReference type="SUPFAM" id="SSF52540">
    <property type="entry name" value="P-loop containing nucleoside triphosphate hydrolases"/>
    <property type="match status" value="1"/>
</dbReference>
<dbReference type="PROSITE" id="PS51206">
    <property type="entry name" value="SF3_HELICASE_1"/>
    <property type="match status" value="1"/>
</dbReference>
<evidence type="ECO:0000255" key="1">
    <source>
        <dbReference type="HAMAP-Rule" id="MF_04000"/>
    </source>
</evidence>
<evidence type="ECO:0000256" key="2">
    <source>
        <dbReference type="SAM" id="MobiDB-lite"/>
    </source>
</evidence>
<proteinExistence type="inferred from homology"/>
<keyword id="KW-0067">ATP-binding</keyword>
<keyword id="KW-0235">DNA replication</keyword>
<keyword id="KW-0238">DNA-binding</keyword>
<keyword id="KW-0244">Early protein</keyword>
<keyword id="KW-0347">Helicase</keyword>
<keyword id="KW-1048">Host nucleus</keyword>
<keyword id="KW-0378">Hydrolase</keyword>
<keyword id="KW-0413">Isomerase</keyword>
<keyword id="KW-1017">Isopeptide bond</keyword>
<keyword id="KW-0547">Nucleotide-binding</keyword>
<keyword id="KW-0597">Phosphoprotein</keyword>
<keyword id="KW-1185">Reference proteome</keyword>
<keyword id="KW-0832">Ubl conjugation</keyword>
<name>VE1_MMPV1</name>